<organism>
    <name type="scientific">Homo sapiens</name>
    <name type="common">Human</name>
    <dbReference type="NCBI Taxonomy" id="9606"/>
    <lineage>
        <taxon>Eukaryota</taxon>
        <taxon>Metazoa</taxon>
        <taxon>Chordata</taxon>
        <taxon>Craniata</taxon>
        <taxon>Vertebrata</taxon>
        <taxon>Euteleostomi</taxon>
        <taxon>Mammalia</taxon>
        <taxon>Eutheria</taxon>
        <taxon>Euarchontoglires</taxon>
        <taxon>Primates</taxon>
        <taxon>Haplorrhini</taxon>
        <taxon>Catarrhini</taxon>
        <taxon>Hominidae</taxon>
        <taxon>Homo</taxon>
    </lineage>
</organism>
<reference key="1">
    <citation type="journal article" date="2004" name="Genome Res.">
        <title>The status, quality, and expansion of the NIH full-length cDNA project: the Mammalian Gene Collection (MGC).</title>
        <authorList>
            <consortium name="The MGC Project Team"/>
        </authorList>
    </citation>
    <scope>NUCLEOTIDE SEQUENCE [LARGE SCALE MRNA]</scope>
    <source>
        <tissue>Skin</tissue>
    </source>
</reference>
<reference key="2">
    <citation type="journal article" date="2011" name="BMC Syst. Biol.">
        <title>Initial characterization of the human central proteome.</title>
        <authorList>
            <person name="Burkard T.R."/>
            <person name="Planyavsky M."/>
            <person name="Kaupe I."/>
            <person name="Breitwieser F.P."/>
            <person name="Buerckstuemmer T."/>
            <person name="Bennett K.L."/>
            <person name="Superti-Furga G."/>
            <person name="Colinge J."/>
        </authorList>
    </citation>
    <scope>IDENTIFICATION BY MASS SPECTROMETRY [LARGE SCALE ANALYSIS]</scope>
</reference>
<reference key="3">
    <citation type="journal article" date="2015" name="Proteomics">
        <title>N-terminome analysis of the human mitochondrial proteome.</title>
        <authorList>
            <person name="Vaca Jacome A.S."/>
            <person name="Rabilloud T."/>
            <person name="Schaeffer-Reiss C."/>
            <person name="Rompais M."/>
            <person name="Ayoub D."/>
            <person name="Lane L."/>
            <person name="Bairoch A."/>
            <person name="Van Dorsselaer A."/>
            <person name="Carapito C."/>
        </authorList>
    </citation>
    <scope>IDENTIFICATION BY MASS SPECTROMETRY [LARGE SCALE ANALYSIS]</scope>
</reference>
<reference evidence="6" key="4">
    <citation type="journal article" date="2015" name="Science">
        <title>Ribosome. The structure of the human mitochondrial ribosome.</title>
        <authorList>
            <person name="Amunts A."/>
            <person name="Brown A."/>
            <person name="Toots J."/>
            <person name="Scheres S.H."/>
            <person name="Ramakrishnan V."/>
        </authorList>
    </citation>
    <scope>STRUCTURE BY ELECTRON MICROSCOPY (3.50 ANGSTROMS)</scope>
    <scope>SUBCELLULAR LOCATION</scope>
    <scope>SUBUNIT</scope>
</reference>
<reference evidence="7 8" key="5">
    <citation type="journal article" date="2017" name="Nat. Struct. Mol. Biol.">
        <title>Structures of the human mitochondrial ribosome in native states of assembly.</title>
        <authorList>
            <person name="Brown A."/>
            <person name="Rathore S."/>
            <person name="Kimanius D."/>
            <person name="Aibara S."/>
            <person name="Bai X.C."/>
            <person name="Rorbach J."/>
            <person name="Amunts A."/>
            <person name="Ramakrishnan V."/>
        </authorList>
    </citation>
    <scope>STRUCTURE BY ELECTRON MICROSCOPY (3.03 ANGSTROMS)</scope>
    <scope>SUBCELLULAR LOCATION</scope>
    <scope>SUBUNIT</scope>
</reference>
<evidence type="ECO:0000255" key="1"/>
<evidence type="ECO:0000269" key="2">
    <source>
    </source>
</evidence>
<evidence type="ECO:0000269" key="3">
    <source>
    </source>
</evidence>
<evidence type="ECO:0000303" key="4">
    <source>
    </source>
</evidence>
<evidence type="ECO:0000305" key="5"/>
<evidence type="ECO:0007744" key="6">
    <source>
        <dbReference type="PDB" id="3J9M"/>
    </source>
</evidence>
<evidence type="ECO:0007744" key="7">
    <source>
        <dbReference type="PDB" id="5OOL"/>
    </source>
</evidence>
<evidence type="ECO:0007744" key="8">
    <source>
        <dbReference type="PDB" id="5OOM"/>
    </source>
</evidence>
<evidence type="ECO:0007829" key="9">
    <source>
        <dbReference type="PDB" id="7OIE"/>
    </source>
</evidence>
<evidence type="ECO:0007829" key="10">
    <source>
        <dbReference type="PDB" id="8QU5"/>
    </source>
</evidence>
<comment type="subunit">
    <text evidence="2 3">Component of the mitochondrial large ribosomal subunit (mt-LSU) (PubMed:25838379, PubMed:28892042). Mature mammalian 55S mitochondrial ribosomes consist of a small (28S) and a large (39S) subunit. The 28S small subunit contains a 12S ribosomal RNA (12S mt-rRNA) and 30 different proteins. The 39S large subunit contains a 16S rRNA (16S mt-rRNA), a copy of mitochondrial valine transfer RNA (mt-tRNA(Val)), which plays an integral structural role, and 52 different proteins.</text>
</comment>
<comment type="interaction">
    <interactant intactId="EBI-7825248">
        <id>Q6P161</id>
    </interactant>
    <interactant intactId="EBI-5453723">
        <id>Q9Y3B7</id>
        <label>MRPL11</label>
    </interactant>
    <organismsDiffer>false</organismsDiffer>
    <experiments>3</experiments>
</comment>
<comment type="subcellular location">
    <subcellularLocation>
        <location evidence="2 3">Mitochondrion</location>
    </subcellularLocation>
</comment>
<comment type="similarity">
    <text evidence="5">Belongs to the mitochondrion-specific ribosomal protein mL54 family.</text>
</comment>
<keyword id="KW-0002">3D-structure</keyword>
<keyword id="KW-0496">Mitochondrion</keyword>
<keyword id="KW-1267">Proteomics identification</keyword>
<keyword id="KW-1185">Reference proteome</keyword>
<keyword id="KW-0687">Ribonucleoprotein</keyword>
<keyword id="KW-0689">Ribosomal protein</keyword>
<keyword id="KW-0809">Transit peptide</keyword>
<sequence>MATKRLFGATRTWAGWGAWELLNPATSGRLLARDYAKKPVMKGAKSGKGAVTSEALKDPDVCTDPVQLTTYAMGVNIYKEGQDVPLKPDAEYPEWLFEMNLGPPKTLEELDPESREYWRRLRKQNIWRHNRLSKNKRL</sequence>
<protein>
    <recommendedName>
        <fullName evidence="4">Large ribosomal subunit protein mL54</fullName>
    </recommendedName>
    <alternativeName>
        <fullName>39S ribosomal protein L54, mitochondrial</fullName>
        <shortName>L54mt</shortName>
        <shortName>MRP-L54</shortName>
    </alternativeName>
</protein>
<proteinExistence type="evidence at protein level"/>
<name>RM54_HUMAN</name>
<feature type="transit peptide" description="Mitochondrion" evidence="1">
    <location>
        <begin position="1"/>
        <end position="14"/>
    </location>
</feature>
<feature type="chain" id="PRO_0000278280" description="Large ribosomal subunit protein mL54">
    <location>
        <begin position="15"/>
        <end position="138"/>
    </location>
</feature>
<feature type="helix" evidence="10">
    <location>
        <begin position="115"/>
        <end position="132"/>
    </location>
</feature>
<feature type="turn" evidence="9">
    <location>
        <begin position="133"/>
        <end position="135"/>
    </location>
</feature>
<dbReference type="EMBL" id="BC065273">
    <property type="protein sequence ID" value="AAH65273.1"/>
    <property type="molecule type" value="mRNA"/>
</dbReference>
<dbReference type="CCDS" id="CCDS12111.1"/>
<dbReference type="RefSeq" id="NP_758455.1">
    <property type="nucleotide sequence ID" value="NM_172251.3"/>
</dbReference>
<dbReference type="PDB" id="3J9M">
    <property type="method" value="EM"/>
    <property type="resolution" value="3.50 A"/>
    <property type="chains" value="l=1-138"/>
</dbReference>
<dbReference type="PDB" id="5OOL">
    <property type="method" value="EM"/>
    <property type="resolution" value="3.06 A"/>
    <property type="chains" value="l=1-138"/>
</dbReference>
<dbReference type="PDB" id="5OOM">
    <property type="method" value="EM"/>
    <property type="resolution" value="3.03 A"/>
    <property type="chains" value="l=1-138"/>
</dbReference>
<dbReference type="PDB" id="6I9R">
    <property type="method" value="EM"/>
    <property type="resolution" value="3.90 A"/>
    <property type="chains" value="l=1-138"/>
</dbReference>
<dbReference type="PDB" id="6NU2">
    <property type="method" value="EM"/>
    <property type="resolution" value="3.90 A"/>
    <property type="chains" value="l=114-136"/>
</dbReference>
<dbReference type="PDB" id="6NU3">
    <property type="method" value="EM"/>
    <property type="resolution" value="4.40 A"/>
    <property type="chains" value="l=1-138"/>
</dbReference>
<dbReference type="PDB" id="6VLZ">
    <property type="method" value="EM"/>
    <property type="resolution" value="2.97 A"/>
    <property type="chains" value="l=1-138"/>
</dbReference>
<dbReference type="PDB" id="6VMI">
    <property type="method" value="EM"/>
    <property type="resolution" value="2.96 A"/>
    <property type="chains" value="l=1-138"/>
</dbReference>
<dbReference type="PDB" id="6ZM5">
    <property type="method" value="EM"/>
    <property type="resolution" value="2.89 A"/>
    <property type="chains" value="l=1-138"/>
</dbReference>
<dbReference type="PDB" id="6ZM6">
    <property type="method" value="EM"/>
    <property type="resolution" value="2.59 A"/>
    <property type="chains" value="l=1-138"/>
</dbReference>
<dbReference type="PDB" id="6ZS9">
    <property type="method" value="EM"/>
    <property type="resolution" value="4.00 A"/>
    <property type="chains" value="l=1-138"/>
</dbReference>
<dbReference type="PDB" id="6ZSA">
    <property type="method" value="EM"/>
    <property type="resolution" value="4.00 A"/>
    <property type="chains" value="l=1-138"/>
</dbReference>
<dbReference type="PDB" id="6ZSB">
    <property type="method" value="EM"/>
    <property type="resolution" value="4.50 A"/>
    <property type="chains" value="l=1-138"/>
</dbReference>
<dbReference type="PDB" id="6ZSC">
    <property type="method" value="EM"/>
    <property type="resolution" value="3.50 A"/>
    <property type="chains" value="l=1-138"/>
</dbReference>
<dbReference type="PDB" id="6ZSD">
    <property type="method" value="EM"/>
    <property type="resolution" value="3.70 A"/>
    <property type="chains" value="l=1-138"/>
</dbReference>
<dbReference type="PDB" id="6ZSE">
    <property type="method" value="EM"/>
    <property type="resolution" value="5.00 A"/>
    <property type="chains" value="l=1-138"/>
</dbReference>
<dbReference type="PDB" id="6ZSG">
    <property type="method" value="EM"/>
    <property type="resolution" value="4.00 A"/>
    <property type="chains" value="l=1-138"/>
</dbReference>
<dbReference type="PDB" id="7A5F">
    <property type="method" value="EM"/>
    <property type="resolution" value="4.40 A"/>
    <property type="chains" value="l3=1-138"/>
</dbReference>
<dbReference type="PDB" id="7A5G">
    <property type="method" value="EM"/>
    <property type="resolution" value="4.33 A"/>
    <property type="chains" value="l3=1-138"/>
</dbReference>
<dbReference type="PDB" id="7A5H">
    <property type="method" value="EM"/>
    <property type="resolution" value="3.30 A"/>
    <property type="chains" value="l=1-138"/>
</dbReference>
<dbReference type="PDB" id="7A5I">
    <property type="method" value="EM"/>
    <property type="resolution" value="3.70 A"/>
    <property type="chains" value="l3=1-138"/>
</dbReference>
<dbReference type="PDB" id="7A5J">
    <property type="method" value="EM"/>
    <property type="resolution" value="3.10 A"/>
    <property type="chains" value="l=1-138"/>
</dbReference>
<dbReference type="PDB" id="7A5K">
    <property type="method" value="EM"/>
    <property type="resolution" value="3.70 A"/>
    <property type="chains" value="l3=1-138"/>
</dbReference>
<dbReference type="PDB" id="7L08">
    <property type="method" value="EM"/>
    <property type="resolution" value="3.49 A"/>
    <property type="chains" value="l=1-138"/>
</dbReference>
<dbReference type="PDB" id="7L20">
    <property type="method" value="EM"/>
    <property type="resolution" value="3.15 A"/>
    <property type="chains" value="l=1-138"/>
</dbReference>
<dbReference type="PDB" id="7O9K">
    <property type="method" value="EM"/>
    <property type="resolution" value="3.10 A"/>
    <property type="chains" value="l=1-138"/>
</dbReference>
<dbReference type="PDB" id="7O9M">
    <property type="method" value="EM"/>
    <property type="resolution" value="2.50 A"/>
    <property type="chains" value="l=1-138"/>
</dbReference>
<dbReference type="PDB" id="7ODR">
    <property type="method" value="EM"/>
    <property type="resolution" value="2.90 A"/>
    <property type="chains" value="l=1-138"/>
</dbReference>
<dbReference type="PDB" id="7ODS">
    <property type="method" value="EM"/>
    <property type="resolution" value="3.10 A"/>
    <property type="chains" value="l=1-138"/>
</dbReference>
<dbReference type="PDB" id="7ODT">
    <property type="method" value="EM"/>
    <property type="resolution" value="3.10 A"/>
    <property type="chains" value="l=1-138"/>
</dbReference>
<dbReference type="PDB" id="7OF2">
    <property type="method" value="EM"/>
    <property type="resolution" value="2.70 A"/>
    <property type="chains" value="l=1-138"/>
</dbReference>
<dbReference type="PDB" id="7OF4">
    <property type="method" value="EM"/>
    <property type="resolution" value="2.70 A"/>
    <property type="chains" value="l=1-138"/>
</dbReference>
<dbReference type="PDB" id="7OF6">
    <property type="method" value="EM"/>
    <property type="resolution" value="2.60 A"/>
    <property type="chains" value="l=1-138"/>
</dbReference>
<dbReference type="PDB" id="7OG4">
    <property type="method" value="EM"/>
    <property type="resolution" value="3.80 A"/>
    <property type="chains" value="l=1-138"/>
</dbReference>
<dbReference type="PDB" id="7OI6">
    <property type="method" value="EM"/>
    <property type="resolution" value="5.70 A"/>
    <property type="chains" value="l=1-138"/>
</dbReference>
<dbReference type="PDB" id="7OI7">
    <property type="method" value="EM"/>
    <property type="resolution" value="3.50 A"/>
    <property type="chains" value="l=1-138"/>
</dbReference>
<dbReference type="PDB" id="7OI8">
    <property type="method" value="EM"/>
    <property type="resolution" value="3.50 A"/>
    <property type="chains" value="l=1-138"/>
</dbReference>
<dbReference type="PDB" id="7OI9">
    <property type="method" value="EM"/>
    <property type="resolution" value="3.30 A"/>
    <property type="chains" value="l=1-138"/>
</dbReference>
<dbReference type="PDB" id="7OIA">
    <property type="method" value="EM"/>
    <property type="resolution" value="3.20 A"/>
    <property type="chains" value="l=1-138"/>
</dbReference>
<dbReference type="PDB" id="7OIB">
    <property type="method" value="EM"/>
    <property type="resolution" value="3.30 A"/>
    <property type="chains" value="l=1-138"/>
</dbReference>
<dbReference type="PDB" id="7OIC">
    <property type="method" value="EM"/>
    <property type="resolution" value="3.10 A"/>
    <property type="chains" value="l=1-138"/>
</dbReference>
<dbReference type="PDB" id="7OID">
    <property type="method" value="EM"/>
    <property type="resolution" value="3.70 A"/>
    <property type="chains" value="l=1-138"/>
</dbReference>
<dbReference type="PDB" id="7OIE">
    <property type="method" value="EM"/>
    <property type="resolution" value="3.50 A"/>
    <property type="chains" value="l=1-138"/>
</dbReference>
<dbReference type="PDB" id="7PD3">
    <property type="method" value="EM"/>
    <property type="resolution" value="3.40 A"/>
    <property type="chains" value="l=1-138"/>
</dbReference>
<dbReference type="PDB" id="7PO4">
    <property type="method" value="EM"/>
    <property type="resolution" value="2.56 A"/>
    <property type="chains" value="l=1-138"/>
</dbReference>
<dbReference type="PDB" id="7QI4">
    <property type="method" value="EM"/>
    <property type="resolution" value="2.21 A"/>
    <property type="chains" value="l=1-138"/>
</dbReference>
<dbReference type="PDB" id="7QI5">
    <property type="method" value="EM"/>
    <property type="resolution" value="2.63 A"/>
    <property type="chains" value="l=1-138"/>
</dbReference>
<dbReference type="PDB" id="7QI6">
    <property type="method" value="EM"/>
    <property type="resolution" value="2.98 A"/>
    <property type="chains" value="l=1-138"/>
</dbReference>
<dbReference type="PDB" id="8ANY">
    <property type="method" value="EM"/>
    <property type="resolution" value="2.85 A"/>
    <property type="chains" value="l=1-138"/>
</dbReference>
<dbReference type="PDB" id="8K2A">
    <property type="method" value="EM"/>
    <property type="resolution" value="2.90 A"/>
    <property type="chains" value="L4=1-138"/>
</dbReference>
<dbReference type="PDB" id="8K2B">
    <property type="method" value="EM"/>
    <property type="resolution" value="3.40 A"/>
    <property type="chains" value="L4=1-138"/>
</dbReference>
<dbReference type="PDB" id="8OIR">
    <property type="method" value="EM"/>
    <property type="resolution" value="3.10 A"/>
    <property type="chains" value="Bc=1-138"/>
</dbReference>
<dbReference type="PDB" id="8OIT">
    <property type="method" value="EM"/>
    <property type="resolution" value="2.90 A"/>
    <property type="chains" value="Bc=1-138"/>
</dbReference>
<dbReference type="PDB" id="8PK0">
    <property type="method" value="EM"/>
    <property type="resolution" value="3.03 A"/>
    <property type="chains" value="l=1-138"/>
</dbReference>
<dbReference type="PDB" id="8QSJ">
    <property type="method" value="EM"/>
    <property type="resolution" value="3.00 A"/>
    <property type="chains" value="l=1-138"/>
</dbReference>
<dbReference type="PDB" id="8QU5">
    <property type="method" value="EM"/>
    <property type="resolution" value="2.42 A"/>
    <property type="chains" value="l=1-138"/>
</dbReference>
<dbReference type="PDB" id="8RRI">
    <property type="method" value="EM"/>
    <property type="resolution" value="2.40 A"/>
    <property type="chains" value="l=1-138"/>
</dbReference>
<dbReference type="PDB" id="8XT0">
    <property type="method" value="EM"/>
    <property type="resolution" value="3.20 A"/>
    <property type="chains" value="L4=1-138"/>
</dbReference>
<dbReference type="PDB" id="8XT1">
    <property type="method" value="EM"/>
    <property type="resolution" value="3.10 A"/>
    <property type="chains" value="L4=1-138"/>
</dbReference>
<dbReference type="PDB" id="8XT2">
    <property type="method" value="EM"/>
    <property type="resolution" value="3.30 A"/>
    <property type="chains" value="L4=1-138"/>
</dbReference>
<dbReference type="PDB" id="8XT3">
    <property type="method" value="EM"/>
    <property type="resolution" value="3.10 A"/>
    <property type="chains" value="L4=1-138"/>
</dbReference>
<dbReference type="PDBsum" id="3J9M"/>
<dbReference type="PDBsum" id="5OOL"/>
<dbReference type="PDBsum" id="5OOM"/>
<dbReference type="PDBsum" id="6I9R"/>
<dbReference type="PDBsum" id="6NU2"/>
<dbReference type="PDBsum" id="6NU3"/>
<dbReference type="PDBsum" id="6VLZ"/>
<dbReference type="PDBsum" id="6VMI"/>
<dbReference type="PDBsum" id="6ZM5"/>
<dbReference type="PDBsum" id="6ZM6"/>
<dbReference type="PDBsum" id="6ZS9"/>
<dbReference type="PDBsum" id="6ZSA"/>
<dbReference type="PDBsum" id="6ZSB"/>
<dbReference type="PDBsum" id="6ZSC"/>
<dbReference type="PDBsum" id="6ZSD"/>
<dbReference type="PDBsum" id="6ZSE"/>
<dbReference type="PDBsum" id="6ZSG"/>
<dbReference type="PDBsum" id="7A5F"/>
<dbReference type="PDBsum" id="7A5G"/>
<dbReference type="PDBsum" id="7A5H"/>
<dbReference type="PDBsum" id="7A5I"/>
<dbReference type="PDBsum" id="7A5J"/>
<dbReference type="PDBsum" id="7A5K"/>
<dbReference type="PDBsum" id="7L08"/>
<dbReference type="PDBsum" id="7L20"/>
<dbReference type="PDBsum" id="7O9K"/>
<dbReference type="PDBsum" id="7O9M"/>
<dbReference type="PDBsum" id="7ODR"/>
<dbReference type="PDBsum" id="7ODS"/>
<dbReference type="PDBsum" id="7ODT"/>
<dbReference type="PDBsum" id="7OF2"/>
<dbReference type="PDBsum" id="7OF4"/>
<dbReference type="PDBsum" id="7OF6"/>
<dbReference type="PDBsum" id="7OG4"/>
<dbReference type="PDBsum" id="7OI6"/>
<dbReference type="PDBsum" id="7OI7"/>
<dbReference type="PDBsum" id="7OI8"/>
<dbReference type="PDBsum" id="7OI9"/>
<dbReference type="PDBsum" id="7OIA"/>
<dbReference type="PDBsum" id="7OIB"/>
<dbReference type="PDBsum" id="7OIC"/>
<dbReference type="PDBsum" id="7OID"/>
<dbReference type="PDBsum" id="7OIE"/>
<dbReference type="PDBsum" id="7PD3"/>
<dbReference type="PDBsum" id="7PO4"/>
<dbReference type="PDBsum" id="7QI4"/>
<dbReference type="PDBsum" id="7QI5"/>
<dbReference type="PDBsum" id="7QI6"/>
<dbReference type="PDBsum" id="8ANY"/>
<dbReference type="PDBsum" id="8K2A"/>
<dbReference type="PDBsum" id="8K2B"/>
<dbReference type="PDBsum" id="8OIR"/>
<dbReference type="PDBsum" id="8OIT"/>
<dbReference type="PDBsum" id="8PK0"/>
<dbReference type="PDBsum" id="8QSJ"/>
<dbReference type="PDBsum" id="8QU5"/>
<dbReference type="PDBsum" id="8RRI"/>
<dbReference type="PDBsum" id="8XT0"/>
<dbReference type="PDBsum" id="8XT1"/>
<dbReference type="PDBsum" id="8XT2"/>
<dbReference type="PDBsum" id="8XT3"/>
<dbReference type="EMDB" id="EMD-0514"/>
<dbReference type="EMDB" id="EMD-0515"/>
<dbReference type="EMDB" id="EMD-11278"/>
<dbReference type="EMDB" id="EMD-11279"/>
<dbReference type="EMDB" id="EMD-11390"/>
<dbReference type="EMDB" id="EMD-11391"/>
<dbReference type="EMDB" id="EMD-11392"/>
<dbReference type="EMDB" id="EMD-11393"/>
<dbReference type="EMDB" id="EMD-11394"/>
<dbReference type="EMDB" id="EMD-11395"/>
<dbReference type="EMDB" id="EMD-11397"/>
<dbReference type="EMDB" id="EMD-11641"/>
<dbReference type="EMDB" id="EMD-11642"/>
<dbReference type="EMDB" id="EMD-11643"/>
<dbReference type="EMDB" id="EMD-11644"/>
<dbReference type="EMDB" id="EMD-11645"/>
<dbReference type="EMDB" id="EMD-11646"/>
<dbReference type="EMDB" id="EMD-12763"/>
<dbReference type="EMDB" id="EMD-12764"/>
<dbReference type="EMDB" id="EMD-12845"/>
<dbReference type="EMDB" id="EMD-12846"/>
<dbReference type="EMDB" id="EMD-12847"/>
<dbReference type="EMDB" id="EMD-12867"/>
<dbReference type="EMDB" id="EMD-12869"/>
<dbReference type="EMDB" id="EMD-12871"/>
<dbReference type="EMDB" id="EMD-12877"/>
<dbReference type="EMDB" id="EMD-12919"/>
<dbReference type="EMDB" id="EMD-12920"/>
<dbReference type="EMDB" id="EMD-12921"/>
<dbReference type="EMDB" id="EMD-12922"/>
<dbReference type="EMDB" id="EMD-12923"/>
<dbReference type="EMDB" id="EMD-12924"/>
<dbReference type="EMDB" id="EMD-12925"/>
<dbReference type="EMDB" id="EMD-12926"/>
<dbReference type="EMDB" id="EMD-12927"/>
<dbReference type="EMDB" id="EMD-13329"/>
<dbReference type="EMDB" id="EMD-13562"/>
<dbReference type="EMDB" id="EMD-13980"/>
<dbReference type="EMDB" id="EMD-13981"/>
<dbReference type="EMDB" id="EMD-13982"/>
<dbReference type="EMDB" id="EMD-15544"/>
<dbReference type="EMDB" id="EMD-16897"/>
<dbReference type="EMDB" id="EMD-16899"/>
<dbReference type="EMDB" id="EMD-17719"/>
<dbReference type="EMDB" id="EMD-19460"/>
<dbReference type="EMDB" id="EMD-21233"/>
<dbReference type="EMDB" id="EMD-21242"/>
<dbReference type="EMDB" id="EMD-23096"/>
<dbReference type="EMDB" id="EMD-23121"/>
<dbReference type="EMDB" id="EMD-36836"/>
<dbReference type="EMDB" id="EMD-36837"/>
<dbReference type="EMDB" id="EMD-3842"/>
<dbReference type="EMDB" id="EMD-3843"/>
<dbReference type="EMDB" id="EMD-38632"/>
<dbReference type="EMDB" id="EMD-38633"/>
<dbReference type="EMDB" id="EMD-38634"/>
<dbReference type="EMDB" id="EMD-38635"/>
<dbReference type="EMDB" id="EMD-4434"/>
<dbReference type="SMR" id="Q6P161"/>
<dbReference type="BioGRID" id="125522">
    <property type="interactions" value="61"/>
</dbReference>
<dbReference type="ComplexPortal" id="CPX-5226">
    <property type="entry name" value="39S mitochondrial large ribosomal subunit"/>
</dbReference>
<dbReference type="CORUM" id="Q6P161"/>
<dbReference type="FunCoup" id="Q6P161">
    <property type="interactions" value="1034"/>
</dbReference>
<dbReference type="IntAct" id="Q6P161">
    <property type="interactions" value="28"/>
</dbReference>
<dbReference type="MINT" id="Q6P161"/>
<dbReference type="STRING" id="9606.ENSP00000331849"/>
<dbReference type="iPTMnet" id="Q6P161"/>
<dbReference type="PhosphoSitePlus" id="Q6P161"/>
<dbReference type="BioMuta" id="MRPL54"/>
<dbReference type="DMDM" id="74737109"/>
<dbReference type="jPOST" id="Q6P161"/>
<dbReference type="MassIVE" id="Q6P161"/>
<dbReference type="PaxDb" id="9606-ENSP00000331849"/>
<dbReference type="PeptideAtlas" id="Q6P161"/>
<dbReference type="ProteomicsDB" id="66822"/>
<dbReference type="Pumba" id="Q6P161"/>
<dbReference type="TopDownProteomics" id="Q6P161"/>
<dbReference type="Antibodypedia" id="23347">
    <property type="antibodies" value="168 antibodies from 23 providers"/>
</dbReference>
<dbReference type="DNASU" id="116541"/>
<dbReference type="Ensembl" id="ENST00000330133.5">
    <property type="protein sequence ID" value="ENSP00000331849.3"/>
    <property type="gene ID" value="ENSG00000183617.5"/>
</dbReference>
<dbReference type="GeneID" id="116541"/>
<dbReference type="KEGG" id="hsa:116541"/>
<dbReference type="MANE-Select" id="ENST00000330133.5">
    <property type="protein sequence ID" value="ENSP00000331849.3"/>
    <property type="RefSeq nucleotide sequence ID" value="NM_172251.3"/>
    <property type="RefSeq protein sequence ID" value="NP_758455.1"/>
</dbReference>
<dbReference type="UCSC" id="uc002lyq.5">
    <property type="organism name" value="human"/>
</dbReference>
<dbReference type="AGR" id="HGNC:16685"/>
<dbReference type="CTD" id="116541"/>
<dbReference type="GeneCards" id="MRPL54"/>
<dbReference type="HGNC" id="HGNC:16685">
    <property type="gene designation" value="MRPL54"/>
</dbReference>
<dbReference type="HPA" id="ENSG00000183617">
    <property type="expression patterns" value="Low tissue specificity"/>
</dbReference>
<dbReference type="MIM" id="611858">
    <property type="type" value="gene"/>
</dbReference>
<dbReference type="neXtProt" id="NX_Q6P161"/>
<dbReference type="OpenTargets" id="ENSG00000183617"/>
<dbReference type="PharmGKB" id="PA30987"/>
<dbReference type="VEuPathDB" id="HostDB:ENSG00000183617"/>
<dbReference type="eggNOG" id="KOG3435">
    <property type="taxonomic scope" value="Eukaryota"/>
</dbReference>
<dbReference type="GeneTree" id="ENSGT00390000001201"/>
<dbReference type="HOGENOM" id="CLU_143073_1_1_1"/>
<dbReference type="InParanoid" id="Q6P161"/>
<dbReference type="OMA" id="WLFEMNV"/>
<dbReference type="OrthoDB" id="10252718at2759"/>
<dbReference type="PAN-GO" id="Q6P161">
    <property type="GO annotations" value="2 GO annotations based on evolutionary models"/>
</dbReference>
<dbReference type="PhylomeDB" id="Q6P161"/>
<dbReference type="TreeFam" id="TF314007"/>
<dbReference type="PathwayCommons" id="Q6P161"/>
<dbReference type="Reactome" id="R-HSA-5368286">
    <property type="pathway name" value="Mitochondrial translation initiation"/>
</dbReference>
<dbReference type="Reactome" id="R-HSA-5389840">
    <property type="pathway name" value="Mitochondrial translation elongation"/>
</dbReference>
<dbReference type="Reactome" id="R-HSA-5419276">
    <property type="pathway name" value="Mitochondrial translation termination"/>
</dbReference>
<dbReference type="SignaLink" id="Q6P161"/>
<dbReference type="SIGNOR" id="Q6P161"/>
<dbReference type="BioGRID-ORCS" id="116541">
    <property type="hits" value="364 hits in 1161 CRISPR screens"/>
</dbReference>
<dbReference type="GenomeRNAi" id="116541"/>
<dbReference type="Pharos" id="Q6P161">
    <property type="development level" value="Tdark"/>
</dbReference>
<dbReference type="PRO" id="PR:Q6P161"/>
<dbReference type="Proteomes" id="UP000005640">
    <property type="component" value="Chromosome 19"/>
</dbReference>
<dbReference type="RNAct" id="Q6P161">
    <property type="molecule type" value="protein"/>
</dbReference>
<dbReference type="Bgee" id="ENSG00000183617">
    <property type="expression patterns" value="Expressed in granulocyte and 178 other cell types or tissues"/>
</dbReference>
<dbReference type="ExpressionAtlas" id="Q6P161">
    <property type="expression patterns" value="baseline and differential"/>
</dbReference>
<dbReference type="GO" id="GO:0005743">
    <property type="term" value="C:mitochondrial inner membrane"/>
    <property type="evidence" value="ECO:0000304"/>
    <property type="project" value="Reactome"/>
</dbReference>
<dbReference type="GO" id="GO:0005762">
    <property type="term" value="C:mitochondrial large ribosomal subunit"/>
    <property type="evidence" value="ECO:0000314"/>
    <property type="project" value="UniProtKB"/>
</dbReference>
<dbReference type="GO" id="GO:0005739">
    <property type="term" value="C:mitochondrion"/>
    <property type="evidence" value="ECO:0000314"/>
    <property type="project" value="UniProtKB"/>
</dbReference>
<dbReference type="GO" id="GO:0003723">
    <property type="term" value="F:RNA binding"/>
    <property type="evidence" value="ECO:0007005"/>
    <property type="project" value="UniProtKB"/>
</dbReference>
<dbReference type="GO" id="GO:0003735">
    <property type="term" value="F:structural constituent of ribosome"/>
    <property type="evidence" value="ECO:0000318"/>
    <property type="project" value="GO_Central"/>
</dbReference>
<dbReference type="GO" id="GO:0032543">
    <property type="term" value="P:mitochondrial translation"/>
    <property type="evidence" value="ECO:0000303"/>
    <property type="project" value="ComplexPortal"/>
</dbReference>
<dbReference type="InterPro" id="IPR013870">
    <property type="entry name" value="Ribosomal_mL54"/>
</dbReference>
<dbReference type="PANTHER" id="PTHR28595">
    <property type="entry name" value="39S RIBOSOMAL PROTEIN L54, MITOCHONDRIAL"/>
    <property type="match status" value="1"/>
</dbReference>
<dbReference type="PANTHER" id="PTHR28595:SF1">
    <property type="entry name" value="LARGE RIBOSOMAL SUBUNIT PROTEIN ML54"/>
    <property type="match status" value="1"/>
</dbReference>
<dbReference type="Pfam" id="PF08561">
    <property type="entry name" value="Ribosomal_L37"/>
    <property type="match status" value="1"/>
</dbReference>
<gene>
    <name type="primary">MRPL54</name>
</gene>
<accession>Q6P161</accession>